<comment type="function">
    <text evidence="1">Removes the formyl group from the N-terminal Met of newly synthesized proteins. Requires at least a dipeptide for an efficient rate of reaction. N-terminal L-methionine is a prerequisite for activity but the enzyme has broad specificity at other positions.</text>
</comment>
<comment type="catalytic activity">
    <reaction evidence="1">
        <text>N-terminal N-formyl-L-methionyl-[peptide] + H2O = N-terminal L-methionyl-[peptide] + formate</text>
        <dbReference type="Rhea" id="RHEA:24420"/>
        <dbReference type="Rhea" id="RHEA-COMP:10639"/>
        <dbReference type="Rhea" id="RHEA-COMP:10640"/>
        <dbReference type="ChEBI" id="CHEBI:15377"/>
        <dbReference type="ChEBI" id="CHEBI:15740"/>
        <dbReference type="ChEBI" id="CHEBI:49298"/>
        <dbReference type="ChEBI" id="CHEBI:64731"/>
        <dbReference type="EC" id="3.5.1.88"/>
    </reaction>
</comment>
<comment type="cofactor">
    <cofactor evidence="1">
        <name>Fe(2+)</name>
        <dbReference type="ChEBI" id="CHEBI:29033"/>
    </cofactor>
    <text evidence="1">Binds 1 Fe(2+) ion.</text>
</comment>
<comment type="similarity">
    <text evidence="1">Belongs to the polypeptide deformylase family.</text>
</comment>
<dbReference type="EC" id="3.5.1.88" evidence="1"/>
<dbReference type="EMBL" id="AE016879">
    <property type="protein sequence ID" value="AAP27733.1"/>
    <property type="molecule type" value="Genomic_DNA"/>
</dbReference>
<dbReference type="EMBL" id="AE017334">
    <property type="protein sequence ID" value="AAT33121.1"/>
    <property type="molecule type" value="Genomic_DNA"/>
</dbReference>
<dbReference type="EMBL" id="AE017225">
    <property type="protein sequence ID" value="AAT56020.1"/>
    <property type="molecule type" value="Genomic_DNA"/>
</dbReference>
<dbReference type="RefSeq" id="NP_846247.1">
    <property type="nucleotide sequence ID" value="NC_003997.3"/>
</dbReference>
<dbReference type="RefSeq" id="YP_029969.1">
    <property type="nucleotide sequence ID" value="NC_005945.1"/>
</dbReference>
<dbReference type="SMR" id="Q81WH1"/>
<dbReference type="STRING" id="261594.GBAA_4005"/>
<dbReference type="DNASU" id="1086728"/>
<dbReference type="GeneID" id="45023696"/>
<dbReference type="KEGG" id="ban:BA_4005"/>
<dbReference type="KEGG" id="banh:HYU01_19580"/>
<dbReference type="KEGG" id="bar:GBAA_4005"/>
<dbReference type="KEGG" id="bat:BAS3718"/>
<dbReference type="PATRIC" id="fig|198094.11.peg.3975"/>
<dbReference type="eggNOG" id="COG0242">
    <property type="taxonomic scope" value="Bacteria"/>
</dbReference>
<dbReference type="HOGENOM" id="CLU_061901_4_2_9"/>
<dbReference type="OMA" id="VCIQHEI"/>
<dbReference type="OrthoDB" id="9784988at2"/>
<dbReference type="Proteomes" id="UP000000427">
    <property type="component" value="Chromosome"/>
</dbReference>
<dbReference type="Proteomes" id="UP000000594">
    <property type="component" value="Chromosome"/>
</dbReference>
<dbReference type="GO" id="GO:0046872">
    <property type="term" value="F:metal ion binding"/>
    <property type="evidence" value="ECO:0007669"/>
    <property type="project" value="UniProtKB-KW"/>
</dbReference>
<dbReference type="GO" id="GO:0042586">
    <property type="term" value="F:peptide deformylase activity"/>
    <property type="evidence" value="ECO:0007669"/>
    <property type="project" value="UniProtKB-UniRule"/>
</dbReference>
<dbReference type="GO" id="GO:0043686">
    <property type="term" value="P:co-translational protein modification"/>
    <property type="evidence" value="ECO:0007669"/>
    <property type="project" value="TreeGrafter"/>
</dbReference>
<dbReference type="GO" id="GO:0006412">
    <property type="term" value="P:translation"/>
    <property type="evidence" value="ECO:0007669"/>
    <property type="project" value="UniProtKB-UniRule"/>
</dbReference>
<dbReference type="CDD" id="cd00487">
    <property type="entry name" value="Pep_deformylase"/>
    <property type="match status" value="1"/>
</dbReference>
<dbReference type="FunFam" id="3.90.45.10:FF:000005">
    <property type="entry name" value="Peptide deformylase"/>
    <property type="match status" value="1"/>
</dbReference>
<dbReference type="Gene3D" id="3.90.45.10">
    <property type="entry name" value="Peptide deformylase"/>
    <property type="match status" value="1"/>
</dbReference>
<dbReference type="HAMAP" id="MF_00163">
    <property type="entry name" value="Pep_deformylase"/>
    <property type="match status" value="1"/>
</dbReference>
<dbReference type="InterPro" id="IPR023635">
    <property type="entry name" value="Peptide_deformylase"/>
</dbReference>
<dbReference type="InterPro" id="IPR036821">
    <property type="entry name" value="Peptide_deformylase_sf"/>
</dbReference>
<dbReference type="NCBIfam" id="TIGR00079">
    <property type="entry name" value="pept_deformyl"/>
    <property type="match status" value="1"/>
</dbReference>
<dbReference type="NCBIfam" id="NF001159">
    <property type="entry name" value="PRK00150.1-3"/>
    <property type="match status" value="1"/>
</dbReference>
<dbReference type="PANTHER" id="PTHR10458">
    <property type="entry name" value="PEPTIDE DEFORMYLASE"/>
    <property type="match status" value="1"/>
</dbReference>
<dbReference type="PANTHER" id="PTHR10458:SF22">
    <property type="entry name" value="PEPTIDE DEFORMYLASE"/>
    <property type="match status" value="1"/>
</dbReference>
<dbReference type="Pfam" id="PF01327">
    <property type="entry name" value="Pep_deformylase"/>
    <property type="match status" value="1"/>
</dbReference>
<dbReference type="PIRSF" id="PIRSF004749">
    <property type="entry name" value="Pep_def"/>
    <property type="match status" value="1"/>
</dbReference>
<dbReference type="PRINTS" id="PR01576">
    <property type="entry name" value="PDEFORMYLASE"/>
</dbReference>
<dbReference type="SUPFAM" id="SSF56420">
    <property type="entry name" value="Peptide deformylase"/>
    <property type="match status" value="1"/>
</dbReference>
<reference key="1">
    <citation type="journal article" date="2003" name="Nature">
        <title>The genome sequence of Bacillus anthracis Ames and comparison to closely related bacteria.</title>
        <authorList>
            <person name="Read T.D."/>
            <person name="Peterson S.N."/>
            <person name="Tourasse N.J."/>
            <person name="Baillie L.W."/>
            <person name="Paulsen I.T."/>
            <person name="Nelson K.E."/>
            <person name="Tettelin H."/>
            <person name="Fouts D.E."/>
            <person name="Eisen J.A."/>
            <person name="Gill S.R."/>
            <person name="Holtzapple E.K."/>
            <person name="Okstad O.A."/>
            <person name="Helgason E."/>
            <person name="Rilstone J."/>
            <person name="Wu M."/>
            <person name="Kolonay J.F."/>
            <person name="Beanan M.J."/>
            <person name="Dodson R.J."/>
            <person name="Brinkac L.M."/>
            <person name="Gwinn M.L."/>
            <person name="DeBoy R.T."/>
            <person name="Madpu R."/>
            <person name="Daugherty S.C."/>
            <person name="Durkin A.S."/>
            <person name="Haft D.H."/>
            <person name="Nelson W.C."/>
            <person name="Peterson J.D."/>
            <person name="Pop M."/>
            <person name="Khouri H.M."/>
            <person name="Radune D."/>
            <person name="Benton J.L."/>
            <person name="Mahamoud Y."/>
            <person name="Jiang L."/>
            <person name="Hance I.R."/>
            <person name="Weidman J.F."/>
            <person name="Berry K.J."/>
            <person name="Plaut R.D."/>
            <person name="Wolf A.M."/>
            <person name="Watkins K.L."/>
            <person name="Nierman W.C."/>
            <person name="Hazen A."/>
            <person name="Cline R.T."/>
            <person name="Redmond C."/>
            <person name="Thwaite J.E."/>
            <person name="White O."/>
            <person name="Salzberg S.L."/>
            <person name="Thomason B."/>
            <person name="Friedlander A.M."/>
            <person name="Koehler T.M."/>
            <person name="Hanna P.C."/>
            <person name="Kolstoe A.-B."/>
            <person name="Fraser C.M."/>
        </authorList>
    </citation>
    <scope>NUCLEOTIDE SEQUENCE [LARGE SCALE GENOMIC DNA]</scope>
    <source>
        <strain>Ames / isolate Porton</strain>
    </source>
</reference>
<reference key="2">
    <citation type="journal article" date="2009" name="J. Bacteriol.">
        <title>The complete genome sequence of Bacillus anthracis Ames 'Ancestor'.</title>
        <authorList>
            <person name="Ravel J."/>
            <person name="Jiang L."/>
            <person name="Stanley S.T."/>
            <person name="Wilson M.R."/>
            <person name="Decker R.S."/>
            <person name="Read T.D."/>
            <person name="Worsham P."/>
            <person name="Keim P.S."/>
            <person name="Salzberg S.L."/>
            <person name="Fraser-Liggett C.M."/>
            <person name="Rasko D.A."/>
        </authorList>
    </citation>
    <scope>NUCLEOTIDE SEQUENCE [LARGE SCALE GENOMIC DNA]</scope>
    <source>
        <strain>Ames ancestor</strain>
    </source>
</reference>
<reference key="3">
    <citation type="submission" date="2004-01" db="EMBL/GenBank/DDBJ databases">
        <title>Complete genome sequence of Bacillus anthracis Sterne.</title>
        <authorList>
            <person name="Brettin T.S."/>
            <person name="Bruce D."/>
            <person name="Challacombe J.F."/>
            <person name="Gilna P."/>
            <person name="Han C."/>
            <person name="Hill K."/>
            <person name="Hitchcock P."/>
            <person name="Jackson P."/>
            <person name="Keim P."/>
            <person name="Longmire J."/>
            <person name="Lucas S."/>
            <person name="Okinaka R."/>
            <person name="Richardson P."/>
            <person name="Rubin E."/>
            <person name="Tice H."/>
        </authorList>
    </citation>
    <scope>NUCLEOTIDE SEQUENCE [LARGE SCALE GENOMIC DNA]</scope>
    <source>
        <strain>Sterne</strain>
    </source>
</reference>
<protein>
    <recommendedName>
        <fullName evidence="1">Peptide deformylase 1</fullName>
        <shortName evidence="1">PDF 1</shortName>
        <ecNumber evidence="1">3.5.1.88</ecNumber>
    </recommendedName>
    <alternativeName>
        <fullName evidence="1">Polypeptide deformylase 1</fullName>
    </alternativeName>
</protein>
<evidence type="ECO:0000255" key="1">
    <source>
        <dbReference type="HAMAP-Rule" id="MF_00163"/>
    </source>
</evidence>
<keyword id="KW-0378">Hydrolase</keyword>
<keyword id="KW-0408">Iron</keyword>
<keyword id="KW-0479">Metal-binding</keyword>
<keyword id="KW-0648">Protein biosynthesis</keyword>
<keyword id="KW-1185">Reference proteome</keyword>
<sequence>MAVLEIVKHPNEVLETPCERVINFDKKLVKLLKDMHETMLIADGVGLAAPQVGVSLQVAVVDIGDDTGKIELINPSILEKRGEQVGPEGCLSFPGLYGEVERADYIKVRAQNRRGKVFLLEAEGLLARAIQHEIDHLHGVLFTSKVTRYYEENELE</sequence>
<accession>Q81WH1</accession>
<accession>Q6HUL9</accession>
<accession>Q6KNV3</accession>
<organism>
    <name type="scientific">Bacillus anthracis</name>
    <dbReference type="NCBI Taxonomy" id="1392"/>
    <lineage>
        <taxon>Bacteria</taxon>
        <taxon>Bacillati</taxon>
        <taxon>Bacillota</taxon>
        <taxon>Bacilli</taxon>
        <taxon>Bacillales</taxon>
        <taxon>Bacillaceae</taxon>
        <taxon>Bacillus</taxon>
        <taxon>Bacillus cereus group</taxon>
    </lineage>
</organism>
<name>DEF1_BACAN</name>
<proteinExistence type="inferred from homology"/>
<feature type="chain" id="PRO_0000082733" description="Peptide deformylase 1">
    <location>
        <begin position="1"/>
        <end position="156"/>
    </location>
</feature>
<feature type="active site" evidence="1">
    <location>
        <position position="133"/>
    </location>
</feature>
<feature type="binding site" evidence="1">
    <location>
        <position position="90"/>
    </location>
    <ligand>
        <name>Fe cation</name>
        <dbReference type="ChEBI" id="CHEBI:24875"/>
    </ligand>
</feature>
<feature type="binding site" evidence="1">
    <location>
        <position position="132"/>
    </location>
    <ligand>
        <name>Fe cation</name>
        <dbReference type="ChEBI" id="CHEBI:24875"/>
    </ligand>
</feature>
<feature type="binding site" evidence="1">
    <location>
        <position position="136"/>
    </location>
    <ligand>
        <name>Fe cation</name>
        <dbReference type="ChEBI" id="CHEBI:24875"/>
    </ligand>
</feature>
<gene>
    <name evidence="1" type="primary">def1</name>
    <name type="ordered locus">BA_4005</name>
    <name type="ordered locus">GBAA_4005</name>
    <name type="ordered locus">BAS3718</name>
</gene>